<sequence>MSNQEYTFQTEINQLLDLMIHSMYSNKEIFLRELISNASDALDKLNYLMLTDEKLKGLKITPSIHLSFDSQKKTLTIKDNGIGMDKNDLIEHLGTIAKSGTKSFLSALSGDKKKDSALIGQFGVGFYSAFMVAGKIVVQTKKVTSEQAYAWVSDGKGKFEINECIKDEQGTEITLFLKDEDANFASRWEIDSIVKKYSEHIPFPIFLTYTDTKMEGEGDHKKEVKEEKCEQINQASALWKMNKSELKDKDYKEFYKSFAHDNSEPLSYIHNKVEGSLEYTTLFYIPSVAPFDMFRVDYKSGVKLYVKRVFITDDDKELLPSYLRFIKGVIDSEDLPLNVSREILQQNKILANIRSASVKKILGEIEKLSKDNENYHKFYEPFGKVLKEGLYGDFENKEKLLELLRFYSKDKEKLISLKEYKENLKENQKSIYYLLGENLDLLKASPILEKYAQKGYDVLLLSDEIDAFVMPSVNEYDKMPFRDASHSESLKELGLEEINDEVKNQFKDLIKAFEENLKDEIKGVELSSHLTSAVALIGDEQNAMMANLMRQMGQNMPESKKTLELNPNHAILQKLLKCEDKEQMSAFIWLLYDGAKLLEKGALKDAKSFNERLNSVLLKAL</sequence>
<protein>
    <recommendedName>
        <fullName evidence="1">Chaperone protein HtpG</fullName>
    </recommendedName>
    <alternativeName>
        <fullName evidence="1">Heat shock protein HtpG</fullName>
    </alternativeName>
    <alternativeName>
        <fullName evidence="1">High temperature protein G</fullName>
    </alternativeName>
</protein>
<name>HTPG_HELAH</name>
<evidence type="ECO:0000255" key="1">
    <source>
        <dbReference type="HAMAP-Rule" id="MF_00505"/>
    </source>
</evidence>
<accession>Q17VU7</accession>
<dbReference type="EMBL" id="AM260522">
    <property type="protein sequence ID" value="CAK00229.1"/>
    <property type="molecule type" value="Genomic_DNA"/>
</dbReference>
<dbReference type="RefSeq" id="WP_011578316.1">
    <property type="nucleotide sequence ID" value="NC_008229.1"/>
</dbReference>
<dbReference type="SMR" id="Q17VU7"/>
<dbReference type="STRING" id="382638.Hac_1509"/>
<dbReference type="GeneID" id="31758780"/>
<dbReference type="KEGG" id="hac:Hac_1509"/>
<dbReference type="eggNOG" id="COG0326">
    <property type="taxonomic scope" value="Bacteria"/>
</dbReference>
<dbReference type="HOGENOM" id="CLU_006684_3_0_7"/>
<dbReference type="OrthoDB" id="9802640at2"/>
<dbReference type="BioCyc" id="HACI382638:HAC_RS06395-MONOMER"/>
<dbReference type="Proteomes" id="UP000000775">
    <property type="component" value="Chromosome"/>
</dbReference>
<dbReference type="GO" id="GO:0005737">
    <property type="term" value="C:cytoplasm"/>
    <property type="evidence" value="ECO:0007669"/>
    <property type="project" value="UniProtKB-SubCell"/>
</dbReference>
<dbReference type="GO" id="GO:0005524">
    <property type="term" value="F:ATP binding"/>
    <property type="evidence" value="ECO:0007669"/>
    <property type="project" value="UniProtKB-UniRule"/>
</dbReference>
<dbReference type="GO" id="GO:0016887">
    <property type="term" value="F:ATP hydrolysis activity"/>
    <property type="evidence" value="ECO:0007669"/>
    <property type="project" value="InterPro"/>
</dbReference>
<dbReference type="GO" id="GO:0140662">
    <property type="term" value="F:ATP-dependent protein folding chaperone"/>
    <property type="evidence" value="ECO:0007669"/>
    <property type="project" value="InterPro"/>
</dbReference>
<dbReference type="GO" id="GO:0051082">
    <property type="term" value="F:unfolded protein binding"/>
    <property type="evidence" value="ECO:0007669"/>
    <property type="project" value="UniProtKB-UniRule"/>
</dbReference>
<dbReference type="CDD" id="cd16927">
    <property type="entry name" value="HATPase_Hsp90-like"/>
    <property type="match status" value="1"/>
</dbReference>
<dbReference type="FunFam" id="3.30.230.80:FF:000002">
    <property type="entry name" value="Molecular chaperone HtpG"/>
    <property type="match status" value="1"/>
</dbReference>
<dbReference type="FunFam" id="3.30.565.10:FF:000009">
    <property type="entry name" value="Molecular chaperone HtpG"/>
    <property type="match status" value="1"/>
</dbReference>
<dbReference type="Gene3D" id="3.30.230.80">
    <property type="match status" value="1"/>
</dbReference>
<dbReference type="Gene3D" id="3.40.50.11260">
    <property type="match status" value="1"/>
</dbReference>
<dbReference type="Gene3D" id="1.20.120.790">
    <property type="entry name" value="Heat shock protein 90, C-terminal domain"/>
    <property type="match status" value="1"/>
</dbReference>
<dbReference type="Gene3D" id="3.30.565.10">
    <property type="entry name" value="Histidine kinase-like ATPase, C-terminal domain"/>
    <property type="match status" value="1"/>
</dbReference>
<dbReference type="HAMAP" id="MF_00505">
    <property type="entry name" value="HSP90"/>
    <property type="match status" value="1"/>
</dbReference>
<dbReference type="InterPro" id="IPR036890">
    <property type="entry name" value="HATPase_C_sf"/>
</dbReference>
<dbReference type="InterPro" id="IPR019805">
    <property type="entry name" value="Heat_shock_protein_90_CS"/>
</dbReference>
<dbReference type="InterPro" id="IPR037196">
    <property type="entry name" value="HSP90_C"/>
</dbReference>
<dbReference type="InterPro" id="IPR001404">
    <property type="entry name" value="Hsp90_fam"/>
</dbReference>
<dbReference type="InterPro" id="IPR020575">
    <property type="entry name" value="Hsp90_N"/>
</dbReference>
<dbReference type="InterPro" id="IPR020568">
    <property type="entry name" value="Ribosomal_Su5_D2-typ_SF"/>
</dbReference>
<dbReference type="NCBIfam" id="NF003555">
    <property type="entry name" value="PRK05218.1"/>
    <property type="match status" value="1"/>
</dbReference>
<dbReference type="PANTHER" id="PTHR11528">
    <property type="entry name" value="HEAT SHOCK PROTEIN 90 FAMILY MEMBER"/>
    <property type="match status" value="1"/>
</dbReference>
<dbReference type="Pfam" id="PF13589">
    <property type="entry name" value="HATPase_c_3"/>
    <property type="match status" value="1"/>
</dbReference>
<dbReference type="Pfam" id="PF00183">
    <property type="entry name" value="HSP90"/>
    <property type="match status" value="1"/>
</dbReference>
<dbReference type="PIRSF" id="PIRSF002583">
    <property type="entry name" value="Hsp90"/>
    <property type="match status" value="1"/>
</dbReference>
<dbReference type="PRINTS" id="PR00775">
    <property type="entry name" value="HEATSHOCK90"/>
</dbReference>
<dbReference type="SMART" id="SM00387">
    <property type="entry name" value="HATPase_c"/>
    <property type="match status" value="1"/>
</dbReference>
<dbReference type="SUPFAM" id="SSF55874">
    <property type="entry name" value="ATPase domain of HSP90 chaperone/DNA topoisomerase II/histidine kinase"/>
    <property type="match status" value="1"/>
</dbReference>
<dbReference type="SUPFAM" id="SSF110942">
    <property type="entry name" value="HSP90 C-terminal domain"/>
    <property type="match status" value="1"/>
</dbReference>
<dbReference type="SUPFAM" id="SSF54211">
    <property type="entry name" value="Ribosomal protein S5 domain 2-like"/>
    <property type="match status" value="1"/>
</dbReference>
<dbReference type="PROSITE" id="PS00298">
    <property type="entry name" value="HSP90"/>
    <property type="match status" value="1"/>
</dbReference>
<feature type="chain" id="PRO_1000014924" description="Chaperone protein HtpG">
    <location>
        <begin position="1"/>
        <end position="621"/>
    </location>
</feature>
<feature type="region of interest" description="A; substrate-binding" evidence="1">
    <location>
        <begin position="1"/>
        <end position="341"/>
    </location>
</feature>
<feature type="region of interest" description="B" evidence="1">
    <location>
        <begin position="342"/>
        <end position="547"/>
    </location>
</feature>
<feature type="region of interest" description="C" evidence="1">
    <location>
        <begin position="548"/>
        <end position="621"/>
    </location>
</feature>
<gene>
    <name evidence="1" type="primary">htpG</name>
    <name type="ordered locus">Hac_1509</name>
</gene>
<keyword id="KW-0067">ATP-binding</keyword>
<keyword id="KW-0143">Chaperone</keyword>
<keyword id="KW-0963">Cytoplasm</keyword>
<keyword id="KW-0547">Nucleotide-binding</keyword>
<keyword id="KW-0346">Stress response</keyword>
<comment type="function">
    <text evidence="1">Molecular chaperone. Has ATPase activity.</text>
</comment>
<comment type="subunit">
    <text evidence="1">Homodimer.</text>
</comment>
<comment type="subcellular location">
    <subcellularLocation>
        <location evidence="1">Cytoplasm</location>
    </subcellularLocation>
</comment>
<comment type="similarity">
    <text evidence="1">Belongs to the heat shock protein 90 family.</text>
</comment>
<reference key="1">
    <citation type="journal article" date="2006" name="PLoS Genet.">
        <title>Who ate whom? Adaptive Helicobacter genomic changes that accompanied a host jump from early humans to large felines.</title>
        <authorList>
            <person name="Eppinger M."/>
            <person name="Baar C."/>
            <person name="Linz B."/>
            <person name="Raddatz G."/>
            <person name="Lanz C."/>
            <person name="Keller H."/>
            <person name="Morelli G."/>
            <person name="Gressmann H."/>
            <person name="Achtman M."/>
            <person name="Schuster S.C."/>
        </authorList>
    </citation>
    <scope>NUCLEOTIDE SEQUENCE [LARGE SCALE GENOMIC DNA]</scope>
    <source>
        <strain>Sheeba</strain>
    </source>
</reference>
<organism>
    <name type="scientific">Helicobacter acinonychis (strain Sheeba)</name>
    <dbReference type="NCBI Taxonomy" id="382638"/>
    <lineage>
        <taxon>Bacteria</taxon>
        <taxon>Pseudomonadati</taxon>
        <taxon>Campylobacterota</taxon>
        <taxon>Epsilonproteobacteria</taxon>
        <taxon>Campylobacterales</taxon>
        <taxon>Helicobacteraceae</taxon>
        <taxon>Helicobacter</taxon>
    </lineage>
</organism>
<proteinExistence type="inferred from homology"/>